<protein>
    <recommendedName>
        <fullName evidence="1">Phosphoenolpyruvate guanylyltransferase</fullName>
        <shortName evidence="1">PEP guanylyltransferase</shortName>
        <ecNumber evidence="1">2.7.7.105</ecNumber>
    </recommendedName>
</protein>
<sequence length="216" mass="21982">MSGTRAGGTADVGLIIAVKRLAAAKTRLGPVFSTRTRENVVLAMLVDTLTAAAPVSALRSITVITPDEAAAAAAAEFGAEILADPTPDGHGDPLNNAIAAAEHAIAGSFSNIVVLQGDLPALQTQELSEAIAAARHHQRSFVADRLGSGTAALCTFGTALNPQFGPDSSAQHRRSGAIELTGPWPGLRCDVDTPADLAAARRLGIGAATTRVVAHL</sequence>
<accession>B8ZS07</accession>
<keyword id="KW-0342">GTP-binding</keyword>
<keyword id="KW-0547">Nucleotide-binding</keyword>
<keyword id="KW-0548">Nucleotidyltransferase</keyword>
<keyword id="KW-0808">Transferase</keyword>
<dbReference type="EC" id="2.7.7.105" evidence="1"/>
<dbReference type="EMBL" id="FM211192">
    <property type="protein sequence ID" value="CAR71775.1"/>
    <property type="molecule type" value="Genomic_DNA"/>
</dbReference>
<dbReference type="SMR" id="B8ZS07"/>
<dbReference type="KEGG" id="mlb:MLBr01680"/>
<dbReference type="HOGENOM" id="CLU_076569_0_0_11"/>
<dbReference type="UniPathway" id="UPA00071"/>
<dbReference type="Proteomes" id="UP000006900">
    <property type="component" value="Chromosome"/>
</dbReference>
<dbReference type="GO" id="GO:0005525">
    <property type="term" value="F:GTP binding"/>
    <property type="evidence" value="ECO:0007669"/>
    <property type="project" value="UniProtKB-KW"/>
</dbReference>
<dbReference type="GO" id="GO:0043814">
    <property type="term" value="F:phospholactate guanylyltransferase activity"/>
    <property type="evidence" value="ECO:0007669"/>
    <property type="project" value="InterPro"/>
</dbReference>
<dbReference type="GO" id="GO:0052645">
    <property type="term" value="P:F420-0 metabolic process"/>
    <property type="evidence" value="ECO:0007669"/>
    <property type="project" value="UniProtKB-UniRule"/>
</dbReference>
<dbReference type="Gene3D" id="3.90.550.10">
    <property type="entry name" value="Spore Coat Polysaccharide Biosynthesis Protein SpsA, Chain A"/>
    <property type="match status" value="1"/>
</dbReference>
<dbReference type="HAMAP" id="MF_02114">
    <property type="entry name" value="CofC"/>
    <property type="match status" value="1"/>
</dbReference>
<dbReference type="InterPro" id="IPR002835">
    <property type="entry name" value="CofC"/>
</dbReference>
<dbReference type="InterPro" id="IPR029044">
    <property type="entry name" value="Nucleotide-diphossugar_trans"/>
</dbReference>
<dbReference type="NCBIfam" id="TIGR03552">
    <property type="entry name" value="F420_cofC"/>
    <property type="match status" value="1"/>
</dbReference>
<dbReference type="PANTHER" id="PTHR40392">
    <property type="entry name" value="2-PHOSPHO-L-LACTATE GUANYLYLTRANSFERASE"/>
    <property type="match status" value="1"/>
</dbReference>
<dbReference type="PANTHER" id="PTHR40392:SF1">
    <property type="entry name" value="2-PHOSPHO-L-LACTATE GUANYLYLTRANSFERASE"/>
    <property type="match status" value="1"/>
</dbReference>
<dbReference type="Pfam" id="PF01983">
    <property type="entry name" value="CofC"/>
    <property type="match status" value="1"/>
</dbReference>
<dbReference type="SUPFAM" id="SSF53448">
    <property type="entry name" value="Nucleotide-diphospho-sugar transferases"/>
    <property type="match status" value="1"/>
</dbReference>
<organism>
    <name type="scientific">Mycobacterium leprae (strain Br4923)</name>
    <dbReference type="NCBI Taxonomy" id="561304"/>
    <lineage>
        <taxon>Bacteria</taxon>
        <taxon>Bacillati</taxon>
        <taxon>Actinomycetota</taxon>
        <taxon>Actinomycetes</taxon>
        <taxon>Mycobacteriales</taxon>
        <taxon>Mycobacteriaceae</taxon>
        <taxon>Mycobacterium</taxon>
    </lineage>
</organism>
<feature type="chain" id="PRO_0000398692" description="Phosphoenolpyruvate guanylyltransferase">
    <location>
        <begin position="1"/>
        <end position="216"/>
    </location>
</feature>
<feature type="binding site" evidence="1">
    <location>
        <position position="150"/>
    </location>
    <ligand>
        <name>phosphoenolpyruvate</name>
        <dbReference type="ChEBI" id="CHEBI:58702"/>
    </ligand>
</feature>
<feature type="binding site" evidence="1">
    <location>
        <position position="165"/>
    </location>
    <ligand>
        <name>phosphoenolpyruvate</name>
        <dbReference type="ChEBI" id="CHEBI:58702"/>
    </ligand>
</feature>
<feature type="binding site" evidence="1">
    <location>
        <position position="168"/>
    </location>
    <ligand>
        <name>phosphoenolpyruvate</name>
        <dbReference type="ChEBI" id="CHEBI:58702"/>
    </ligand>
</feature>
<evidence type="ECO:0000255" key="1">
    <source>
        <dbReference type="HAMAP-Rule" id="MF_02114"/>
    </source>
</evidence>
<comment type="function">
    <text evidence="1">Guanylyltransferase that catalyzes the activation of phosphoenolpyruvate (PEP) as enolpyruvoyl-2-diphospho-5'-guanosine, via the condensation of PEP with GTP. It is involved in the biosynthesis of coenzyme F420, a hydride carrier cofactor.</text>
</comment>
<comment type="catalytic activity">
    <reaction evidence="1">
        <text>phosphoenolpyruvate + GTP + H(+) = enolpyruvoyl-2-diphospho-5'-guanosine + diphosphate</text>
        <dbReference type="Rhea" id="RHEA:30519"/>
        <dbReference type="ChEBI" id="CHEBI:15378"/>
        <dbReference type="ChEBI" id="CHEBI:33019"/>
        <dbReference type="ChEBI" id="CHEBI:37565"/>
        <dbReference type="ChEBI" id="CHEBI:58702"/>
        <dbReference type="ChEBI" id="CHEBI:143701"/>
        <dbReference type="EC" id="2.7.7.105"/>
    </reaction>
</comment>
<comment type="pathway">
    <text evidence="1">Cofactor biosynthesis; coenzyme F420 biosynthesis.</text>
</comment>
<comment type="similarity">
    <text evidence="1">Belongs to the CofC family.</text>
</comment>
<reference key="1">
    <citation type="journal article" date="2009" name="Nat. Genet.">
        <title>Comparative genomic and phylogeographic analysis of Mycobacterium leprae.</title>
        <authorList>
            <person name="Monot M."/>
            <person name="Honore N."/>
            <person name="Garnier T."/>
            <person name="Zidane N."/>
            <person name="Sherafi D."/>
            <person name="Paniz-Mondolfi A."/>
            <person name="Matsuoka M."/>
            <person name="Taylor G.M."/>
            <person name="Donoghue H.D."/>
            <person name="Bouwman A."/>
            <person name="Mays S."/>
            <person name="Watson C."/>
            <person name="Lockwood D."/>
            <person name="Khamispour A."/>
            <person name="Dowlati Y."/>
            <person name="Jianping S."/>
            <person name="Rea T.H."/>
            <person name="Vera-Cabrera L."/>
            <person name="Stefani M.M."/>
            <person name="Banu S."/>
            <person name="Macdonald M."/>
            <person name="Sapkota B.R."/>
            <person name="Spencer J.S."/>
            <person name="Thomas J."/>
            <person name="Harshman K."/>
            <person name="Singh P."/>
            <person name="Busso P."/>
            <person name="Gattiker A."/>
            <person name="Rougemont J."/>
            <person name="Brennan P.J."/>
            <person name="Cole S.T."/>
        </authorList>
    </citation>
    <scope>NUCLEOTIDE SEQUENCE [LARGE SCALE GENOMIC DNA]</scope>
    <source>
        <strain>Br4923</strain>
    </source>
</reference>
<proteinExistence type="inferred from homology"/>
<gene>
    <name evidence="1" type="primary">fbiD</name>
    <name type="ordered locus">MLBr01680</name>
</gene>
<name>FBID_MYCLB</name>